<gene>
    <name evidence="1" type="primary">uvrC</name>
    <name type="ordered locus">RBAM_025550</name>
</gene>
<accession>A7Z7D7</accession>
<reference key="1">
    <citation type="journal article" date="2007" name="Nat. Biotechnol.">
        <title>Comparative analysis of the complete genome sequence of the plant growth-promoting bacterium Bacillus amyloliquefaciens FZB42.</title>
        <authorList>
            <person name="Chen X.H."/>
            <person name="Koumoutsi A."/>
            <person name="Scholz R."/>
            <person name="Eisenreich A."/>
            <person name="Schneider K."/>
            <person name="Heinemeyer I."/>
            <person name="Morgenstern B."/>
            <person name="Voss B."/>
            <person name="Hess W.R."/>
            <person name="Reva O."/>
            <person name="Junge H."/>
            <person name="Voigt B."/>
            <person name="Jungblut P.R."/>
            <person name="Vater J."/>
            <person name="Suessmuth R."/>
            <person name="Liesegang H."/>
            <person name="Strittmatter A."/>
            <person name="Gottschalk G."/>
            <person name="Borriss R."/>
        </authorList>
    </citation>
    <scope>NUCLEOTIDE SEQUENCE [LARGE SCALE GENOMIC DNA]</scope>
    <source>
        <strain>DSM 23117 / BGSC 10A6 / LMG 26770 / FZB42</strain>
    </source>
</reference>
<organism>
    <name type="scientific">Bacillus velezensis (strain DSM 23117 / BGSC 10A6 / LMG 26770 / FZB42)</name>
    <name type="common">Bacillus amyloliquefaciens subsp. plantarum</name>
    <dbReference type="NCBI Taxonomy" id="326423"/>
    <lineage>
        <taxon>Bacteria</taxon>
        <taxon>Bacillati</taxon>
        <taxon>Bacillota</taxon>
        <taxon>Bacilli</taxon>
        <taxon>Bacillales</taxon>
        <taxon>Bacillaceae</taxon>
        <taxon>Bacillus</taxon>
        <taxon>Bacillus amyloliquefaciens group</taxon>
    </lineage>
</organism>
<evidence type="ECO:0000255" key="1">
    <source>
        <dbReference type="HAMAP-Rule" id="MF_00203"/>
    </source>
</evidence>
<comment type="function">
    <text evidence="1">The UvrABC repair system catalyzes the recognition and processing of DNA lesions. UvrC both incises the 5' and 3' sides of the lesion. The N-terminal half is responsible for the 3' incision and the C-terminal half is responsible for the 5' incision.</text>
</comment>
<comment type="subunit">
    <text evidence="1">Interacts with UvrB in an incision complex.</text>
</comment>
<comment type="subcellular location">
    <subcellularLocation>
        <location evidence="1">Cytoplasm</location>
    </subcellularLocation>
</comment>
<comment type="similarity">
    <text evidence="1">Belongs to the UvrC family.</text>
</comment>
<keyword id="KW-0963">Cytoplasm</keyword>
<keyword id="KW-0227">DNA damage</keyword>
<keyword id="KW-0228">DNA excision</keyword>
<keyword id="KW-0234">DNA repair</keyword>
<keyword id="KW-0267">Excision nuclease</keyword>
<keyword id="KW-0742">SOS response</keyword>
<proteinExistence type="inferred from homology"/>
<sequence>MNKQLKEKLALLPDQPGCYLMKDRQKTVIYVGKAKVLKNRVRSYFTGSHDAKTQRLVSEIEDFEYIVTSSNLEALILEMNLIKKYDPKYNVMLKDDKTYPFIKITHERHPRLIVTRNVKKDKGRYFGPYPNVQAARETKKLLDRLYPLRKCSKLPDRVCLYYHLGQCLAPCVKDISEETNREIVEDITRFLKGGHNEIKKELEAKMAEAAEKLEFERAKEFRDQLAHIESTMEKQKMTMNDLLDRDVFAYAYDKGWMCVQVFFIRQGKLIERDVSMFPMYQEADEEFLTFIGQFYSKNNHFLPKEILVPDSVDRDMITELLETAVHQPKKGPKKELLLLAHKNAKIALREKFSLIERDEERSIGAAERLGEALNIYTPHRIEAFDNSNIQGTNPVSAMIVFIDGKPNKKEYRKYKIKTVTGPDDYGSMREVVRRRYTRVLRENLPLPDLIIIDGGKGQINAARDVLENELGLDVPVAGLAKDDKHRTSNLLIGDPLEPVFLERNSQEFYLLQRIQDEVHRFAISFHRQIRGKSVFQSVLDDIPGIGEKRKKMLLKHFGSVKKMKEASLDDIKKAGVPAAAAQLLFEKLKK</sequence>
<protein>
    <recommendedName>
        <fullName evidence="1">UvrABC system protein C</fullName>
        <shortName evidence="1">Protein UvrC</shortName>
    </recommendedName>
    <alternativeName>
        <fullName evidence="1">Excinuclease ABC subunit C</fullName>
    </alternativeName>
</protein>
<dbReference type="EMBL" id="CP000560">
    <property type="protein sequence ID" value="ABS74913.1"/>
    <property type="molecule type" value="Genomic_DNA"/>
</dbReference>
<dbReference type="RefSeq" id="WP_007408126.1">
    <property type="nucleotide sequence ID" value="NC_009725.2"/>
</dbReference>
<dbReference type="SMR" id="A7Z7D7"/>
<dbReference type="GeneID" id="93081697"/>
<dbReference type="KEGG" id="bay:RBAM_025550"/>
<dbReference type="HOGENOM" id="CLU_014841_3_2_9"/>
<dbReference type="Proteomes" id="UP000001120">
    <property type="component" value="Chromosome"/>
</dbReference>
<dbReference type="GO" id="GO:0005737">
    <property type="term" value="C:cytoplasm"/>
    <property type="evidence" value="ECO:0007669"/>
    <property type="project" value="UniProtKB-SubCell"/>
</dbReference>
<dbReference type="GO" id="GO:0009380">
    <property type="term" value="C:excinuclease repair complex"/>
    <property type="evidence" value="ECO:0007669"/>
    <property type="project" value="InterPro"/>
</dbReference>
<dbReference type="GO" id="GO:0003677">
    <property type="term" value="F:DNA binding"/>
    <property type="evidence" value="ECO:0007669"/>
    <property type="project" value="UniProtKB-UniRule"/>
</dbReference>
<dbReference type="GO" id="GO:0009381">
    <property type="term" value="F:excinuclease ABC activity"/>
    <property type="evidence" value="ECO:0007669"/>
    <property type="project" value="UniProtKB-UniRule"/>
</dbReference>
<dbReference type="GO" id="GO:0006289">
    <property type="term" value="P:nucleotide-excision repair"/>
    <property type="evidence" value="ECO:0007669"/>
    <property type="project" value="UniProtKB-UniRule"/>
</dbReference>
<dbReference type="GO" id="GO:0009432">
    <property type="term" value="P:SOS response"/>
    <property type="evidence" value="ECO:0007669"/>
    <property type="project" value="UniProtKB-UniRule"/>
</dbReference>
<dbReference type="CDD" id="cd10434">
    <property type="entry name" value="GIY-YIG_UvrC_Cho"/>
    <property type="match status" value="1"/>
</dbReference>
<dbReference type="FunFam" id="1.10.150.20:FF:000005">
    <property type="entry name" value="UvrABC system protein C"/>
    <property type="match status" value="1"/>
</dbReference>
<dbReference type="FunFam" id="3.30.420.340:FF:000002">
    <property type="entry name" value="UvrABC system protein C"/>
    <property type="match status" value="1"/>
</dbReference>
<dbReference type="FunFam" id="3.40.1440.10:FF:000001">
    <property type="entry name" value="UvrABC system protein C"/>
    <property type="match status" value="1"/>
</dbReference>
<dbReference type="Gene3D" id="1.10.150.20">
    <property type="entry name" value="5' to 3' exonuclease, C-terminal subdomain"/>
    <property type="match status" value="1"/>
</dbReference>
<dbReference type="Gene3D" id="3.40.1440.10">
    <property type="entry name" value="GIY-YIG endonuclease"/>
    <property type="match status" value="1"/>
</dbReference>
<dbReference type="Gene3D" id="4.10.860.10">
    <property type="entry name" value="UVR domain"/>
    <property type="match status" value="1"/>
</dbReference>
<dbReference type="Gene3D" id="3.30.420.340">
    <property type="entry name" value="UvrC, RNAse H endonuclease domain"/>
    <property type="match status" value="1"/>
</dbReference>
<dbReference type="HAMAP" id="MF_00203">
    <property type="entry name" value="UvrC"/>
    <property type="match status" value="1"/>
</dbReference>
<dbReference type="InterPro" id="IPR000305">
    <property type="entry name" value="GIY-YIG_endonuc"/>
</dbReference>
<dbReference type="InterPro" id="IPR035901">
    <property type="entry name" value="GIY-YIG_endonuc_sf"/>
</dbReference>
<dbReference type="InterPro" id="IPR047296">
    <property type="entry name" value="GIY-YIG_UvrC_Cho"/>
</dbReference>
<dbReference type="InterPro" id="IPR010994">
    <property type="entry name" value="RuvA_2-like"/>
</dbReference>
<dbReference type="InterPro" id="IPR001943">
    <property type="entry name" value="UVR_dom"/>
</dbReference>
<dbReference type="InterPro" id="IPR036876">
    <property type="entry name" value="UVR_dom_sf"/>
</dbReference>
<dbReference type="InterPro" id="IPR050066">
    <property type="entry name" value="UvrABC_protein_C"/>
</dbReference>
<dbReference type="InterPro" id="IPR004791">
    <property type="entry name" value="UvrC"/>
</dbReference>
<dbReference type="InterPro" id="IPR001162">
    <property type="entry name" value="UvrC_RNase_H_dom"/>
</dbReference>
<dbReference type="InterPro" id="IPR038476">
    <property type="entry name" value="UvrC_RNase_H_dom_sf"/>
</dbReference>
<dbReference type="NCBIfam" id="NF001824">
    <property type="entry name" value="PRK00558.1-5"/>
    <property type="match status" value="1"/>
</dbReference>
<dbReference type="NCBIfam" id="TIGR00194">
    <property type="entry name" value="uvrC"/>
    <property type="match status" value="1"/>
</dbReference>
<dbReference type="PANTHER" id="PTHR30562:SF1">
    <property type="entry name" value="UVRABC SYSTEM PROTEIN C"/>
    <property type="match status" value="1"/>
</dbReference>
<dbReference type="PANTHER" id="PTHR30562">
    <property type="entry name" value="UVRC/OXIDOREDUCTASE"/>
    <property type="match status" value="1"/>
</dbReference>
<dbReference type="Pfam" id="PF01541">
    <property type="entry name" value="GIY-YIG"/>
    <property type="match status" value="1"/>
</dbReference>
<dbReference type="Pfam" id="PF14520">
    <property type="entry name" value="HHH_5"/>
    <property type="match status" value="1"/>
</dbReference>
<dbReference type="Pfam" id="PF02151">
    <property type="entry name" value="UVR"/>
    <property type="match status" value="1"/>
</dbReference>
<dbReference type="Pfam" id="PF22920">
    <property type="entry name" value="UvrC_RNaseH"/>
    <property type="match status" value="1"/>
</dbReference>
<dbReference type="Pfam" id="PF08459">
    <property type="entry name" value="UvrC_RNaseH_dom"/>
    <property type="match status" value="1"/>
</dbReference>
<dbReference type="SMART" id="SM00465">
    <property type="entry name" value="GIYc"/>
    <property type="match status" value="1"/>
</dbReference>
<dbReference type="SUPFAM" id="SSF46600">
    <property type="entry name" value="C-terminal UvrC-binding domain of UvrB"/>
    <property type="match status" value="1"/>
</dbReference>
<dbReference type="SUPFAM" id="SSF82771">
    <property type="entry name" value="GIY-YIG endonuclease"/>
    <property type="match status" value="1"/>
</dbReference>
<dbReference type="SUPFAM" id="SSF47781">
    <property type="entry name" value="RuvA domain 2-like"/>
    <property type="match status" value="1"/>
</dbReference>
<dbReference type="PROSITE" id="PS50164">
    <property type="entry name" value="GIY_YIG"/>
    <property type="match status" value="1"/>
</dbReference>
<dbReference type="PROSITE" id="PS50151">
    <property type="entry name" value="UVR"/>
    <property type="match status" value="1"/>
</dbReference>
<dbReference type="PROSITE" id="PS50165">
    <property type="entry name" value="UVRC"/>
    <property type="match status" value="1"/>
</dbReference>
<name>UVRC_BACVZ</name>
<feature type="chain" id="PRO_1000077754" description="UvrABC system protein C">
    <location>
        <begin position="1"/>
        <end position="590"/>
    </location>
</feature>
<feature type="domain" description="GIY-YIG" evidence="1">
    <location>
        <begin position="14"/>
        <end position="91"/>
    </location>
</feature>
<feature type="domain" description="UVR" evidence="1">
    <location>
        <begin position="196"/>
        <end position="231"/>
    </location>
</feature>